<proteinExistence type="inferred from homology"/>
<comment type="function">
    <text evidence="1">An essential GTPase which binds GTP, GDP and possibly (p)ppGpp with moderate affinity, with high nucleotide exchange rates and a fairly low GTP hydrolysis rate. Plays a role in control of the cell cycle, stress response, ribosome biogenesis and in those bacteria that undergo differentiation, in morphogenesis control.</text>
</comment>
<comment type="cofactor">
    <cofactor evidence="1">
        <name>Mg(2+)</name>
        <dbReference type="ChEBI" id="CHEBI:18420"/>
    </cofactor>
</comment>
<comment type="subunit">
    <text evidence="1">Monomer.</text>
</comment>
<comment type="subcellular location">
    <subcellularLocation>
        <location evidence="1">Cytoplasm</location>
    </subcellularLocation>
</comment>
<comment type="similarity">
    <text evidence="1">Belongs to the TRAFAC class OBG-HflX-like GTPase superfamily. OBG GTPase family.</text>
</comment>
<reference key="1">
    <citation type="journal article" date="2008" name="Genome Res.">
        <title>Chlamydia trachomatis: genome sequence analysis of lymphogranuloma venereum isolates.</title>
        <authorList>
            <person name="Thomson N.R."/>
            <person name="Holden M.T.G."/>
            <person name="Carder C."/>
            <person name="Lennard N."/>
            <person name="Lockey S.J."/>
            <person name="Marsh P."/>
            <person name="Skipp P."/>
            <person name="O'Connor C.D."/>
            <person name="Goodhead I."/>
            <person name="Norbertzcak H."/>
            <person name="Harris B."/>
            <person name="Ormond D."/>
            <person name="Rance R."/>
            <person name="Quail M.A."/>
            <person name="Parkhill J."/>
            <person name="Stephens R.S."/>
            <person name="Clarke I.N."/>
        </authorList>
    </citation>
    <scope>NUCLEOTIDE SEQUENCE [LARGE SCALE GENOMIC DNA]</scope>
    <source>
        <strain>UCH-1/proctitis</strain>
    </source>
</reference>
<organism>
    <name type="scientific">Chlamydia trachomatis serovar L2b (strain UCH-1/proctitis)</name>
    <dbReference type="NCBI Taxonomy" id="471473"/>
    <lineage>
        <taxon>Bacteria</taxon>
        <taxon>Pseudomonadati</taxon>
        <taxon>Chlamydiota</taxon>
        <taxon>Chlamydiia</taxon>
        <taxon>Chlamydiales</taxon>
        <taxon>Chlamydiaceae</taxon>
        <taxon>Chlamydia/Chlamydophila group</taxon>
        <taxon>Chlamydia</taxon>
    </lineage>
</organism>
<protein>
    <recommendedName>
        <fullName evidence="1">GTPase Obg</fullName>
        <ecNumber evidence="1">3.6.5.-</ecNumber>
    </recommendedName>
    <alternativeName>
        <fullName evidence="1">GTP-binding protein Obg</fullName>
    </alternativeName>
</protein>
<name>OBG_CHLTB</name>
<sequence>MFVDQITLELRAGKGGNGVVAWRKEKYLPKGGPYGGNGGNGGSILIETVTNMYSFEEYRNLRFLKADDGQAGASNNRTGRNGKDLVLKVPEGTLLRDAATGELIHDFTKDGERIVVCQGGRGGKGNVFFKTSTNRAPTKATPGKPGEIRLVELELKLIADIGLVGFPNAGKSTLFNTLARTEVKVGAYPFTTLHPSLGLVHQEGMLYQKTWIMADIPGIIEGASQNRGLGLDFLRHIERTRLLLFVIDISGIERHSPEQDLKILMGELLAYKEELKDKDMVIALNKIDQLLPDEREERVALLKQQFPDQEFILLSGLTGEGVDALYDLFKSKLSE</sequence>
<evidence type="ECO:0000255" key="1">
    <source>
        <dbReference type="HAMAP-Rule" id="MF_01454"/>
    </source>
</evidence>
<evidence type="ECO:0000255" key="2">
    <source>
        <dbReference type="PROSITE-ProRule" id="PRU01231"/>
    </source>
</evidence>
<dbReference type="EC" id="3.6.5.-" evidence="1"/>
<dbReference type="EMBL" id="AM884177">
    <property type="protein sequence ID" value="CAP07068.1"/>
    <property type="molecule type" value="Genomic_DNA"/>
</dbReference>
<dbReference type="SMR" id="B0BC53"/>
<dbReference type="KEGG" id="ctl:CTLon_0671"/>
<dbReference type="HOGENOM" id="CLU_011747_2_3_0"/>
<dbReference type="Proteomes" id="UP001154401">
    <property type="component" value="Chromosome"/>
</dbReference>
<dbReference type="GO" id="GO:0005737">
    <property type="term" value="C:cytoplasm"/>
    <property type="evidence" value="ECO:0007669"/>
    <property type="project" value="UniProtKB-SubCell"/>
</dbReference>
<dbReference type="GO" id="GO:0005525">
    <property type="term" value="F:GTP binding"/>
    <property type="evidence" value="ECO:0007669"/>
    <property type="project" value="UniProtKB-UniRule"/>
</dbReference>
<dbReference type="GO" id="GO:0003924">
    <property type="term" value="F:GTPase activity"/>
    <property type="evidence" value="ECO:0007669"/>
    <property type="project" value="UniProtKB-UniRule"/>
</dbReference>
<dbReference type="GO" id="GO:0000287">
    <property type="term" value="F:magnesium ion binding"/>
    <property type="evidence" value="ECO:0007669"/>
    <property type="project" value="InterPro"/>
</dbReference>
<dbReference type="GO" id="GO:0042254">
    <property type="term" value="P:ribosome biogenesis"/>
    <property type="evidence" value="ECO:0007669"/>
    <property type="project" value="UniProtKB-UniRule"/>
</dbReference>
<dbReference type="CDD" id="cd01898">
    <property type="entry name" value="Obg"/>
    <property type="match status" value="1"/>
</dbReference>
<dbReference type="FunFam" id="2.70.210.12:FF:000001">
    <property type="entry name" value="GTPase Obg"/>
    <property type="match status" value="1"/>
</dbReference>
<dbReference type="Gene3D" id="2.70.210.12">
    <property type="entry name" value="GTP1/OBG domain"/>
    <property type="match status" value="1"/>
</dbReference>
<dbReference type="Gene3D" id="3.40.50.300">
    <property type="entry name" value="P-loop containing nucleotide triphosphate hydrolases"/>
    <property type="match status" value="1"/>
</dbReference>
<dbReference type="HAMAP" id="MF_01454">
    <property type="entry name" value="GTPase_Obg"/>
    <property type="match status" value="1"/>
</dbReference>
<dbReference type="InterPro" id="IPR031167">
    <property type="entry name" value="G_OBG"/>
</dbReference>
<dbReference type="InterPro" id="IPR006073">
    <property type="entry name" value="GTP-bd"/>
</dbReference>
<dbReference type="InterPro" id="IPR014100">
    <property type="entry name" value="GTP-bd_Obg/CgtA"/>
</dbReference>
<dbReference type="InterPro" id="IPR006169">
    <property type="entry name" value="GTP1_OBG_dom"/>
</dbReference>
<dbReference type="InterPro" id="IPR036726">
    <property type="entry name" value="GTP1_OBG_dom_sf"/>
</dbReference>
<dbReference type="InterPro" id="IPR045086">
    <property type="entry name" value="OBG_GTPase"/>
</dbReference>
<dbReference type="InterPro" id="IPR027417">
    <property type="entry name" value="P-loop_NTPase"/>
</dbReference>
<dbReference type="InterPro" id="IPR005225">
    <property type="entry name" value="Small_GTP-bd"/>
</dbReference>
<dbReference type="NCBIfam" id="TIGR02729">
    <property type="entry name" value="Obg_CgtA"/>
    <property type="match status" value="1"/>
</dbReference>
<dbReference type="NCBIfam" id="NF008955">
    <property type="entry name" value="PRK12297.1"/>
    <property type="match status" value="1"/>
</dbReference>
<dbReference type="NCBIfam" id="NF008956">
    <property type="entry name" value="PRK12299.1"/>
    <property type="match status" value="1"/>
</dbReference>
<dbReference type="NCBIfam" id="TIGR00231">
    <property type="entry name" value="small_GTP"/>
    <property type="match status" value="1"/>
</dbReference>
<dbReference type="PANTHER" id="PTHR11702">
    <property type="entry name" value="DEVELOPMENTALLY REGULATED GTP-BINDING PROTEIN-RELATED"/>
    <property type="match status" value="1"/>
</dbReference>
<dbReference type="PANTHER" id="PTHR11702:SF31">
    <property type="entry name" value="MITOCHONDRIAL RIBOSOME-ASSOCIATED GTPASE 2"/>
    <property type="match status" value="1"/>
</dbReference>
<dbReference type="Pfam" id="PF01018">
    <property type="entry name" value="GTP1_OBG"/>
    <property type="match status" value="1"/>
</dbReference>
<dbReference type="Pfam" id="PF01926">
    <property type="entry name" value="MMR_HSR1"/>
    <property type="match status" value="1"/>
</dbReference>
<dbReference type="PIRSF" id="PIRSF002401">
    <property type="entry name" value="GTP_bd_Obg/CgtA"/>
    <property type="match status" value="1"/>
</dbReference>
<dbReference type="PRINTS" id="PR00326">
    <property type="entry name" value="GTP1OBG"/>
</dbReference>
<dbReference type="SUPFAM" id="SSF82051">
    <property type="entry name" value="Obg GTP-binding protein N-terminal domain"/>
    <property type="match status" value="1"/>
</dbReference>
<dbReference type="SUPFAM" id="SSF52540">
    <property type="entry name" value="P-loop containing nucleoside triphosphate hydrolases"/>
    <property type="match status" value="1"/>
</dbReference>
<dbReference type="PROSITE" id="PS51710">
    <property type="entry name" value="G_OBG"/>
    <property type="match status" value="1"/>
</dbReference>
<dbReference type="PROSITE" id="PS51883">
    <property type="entry name" value="OBG"/>
    <property type="match status" value="1"/>
</dbReference>
<accession>B0BC53</accession>
<feature type="chain" id="PRO_0000385818" description="GTPase Obg">
    <location>
        <begin position="1"/>
        <end position="335"/>
    </location>
</feature>
<feature type="domain" description="Obg" evidence="2">
    <location>
        <begin position="1"/>
        <end position="158"/>
    </location>
</feature>
<feature type="domain" description="OBG-type G" evidence="1">
    <location>
        <begin position="159"/>
        <end position="334"/>
    </location>
</feature>
<feature type="binding site" evidence="1">
    <location>
        <begin position="165"/>
        <end position="172"/>
    </location>
    <ligand>
        <name>GTP</name>
        <dbReference type="ChEBI" id="CHEBI:37565"/>
    </ligand>
</feature>
<feature type="binding site" evidence="1">
    <location>
        <position position="172"/>
    </location>
    <ligand>
        <name>Mg(2+)</name>
        <dbReference type="ChEBI" id="CHEBI:18420"/>
    </ligand>
</feature>
<feature type="binding site" evidence="1">
    <location>
        <begin position="190"/>
        <end position="194"/>
    </location>
    <ligand>
        <name>GTP</name>
        <dbReference type="ChEBI" id="CHEBI:37565"/>
    </ligand>
</feature>
<feature type="binding site" evidence="1">
    <location>
        <position position="192"/>
    </location>
    <ligand>
        <name>Mg(2+)</name>
        <dbReference type="ChEBI" id="CHEBI:18420"/>
    </ligand>
</feature>
<feature type="binding site" evidence="1">
    <location>
        <begin position="215"/>
        <end position="218"/>
    </location>
    <ligand>
        <name>GTP</name>
        <dbReference type="ChEBI" id="CHEBI:37565"/>
    </ligand>
</feature>
<feature type="binding site" evidence="1">
    <location>
        <begin position="285"/>
        <end position="288"/>
    </location>
    <ligand>
        <name>GTP</name>
        <dbReference type="ChEBI" id="CHEBI:37565"/>
    </ligand>
</feature>
<feature type="binding site" evidence="1">
    <location>
        <begin position="315"/>
        <end position="317"/>
    </location>
    <ligand>
        <name>GTP</name>
        <dbReference type="ChEBI" id="CHEBI:37565"/>
    </ligand>
</feature>
<keyword id="KW-0963">Cytoplasm</keyword>
<keyword id="KW-0342">GTP-binding</keyword>
<keyword id="KW-0378">Hydrolase</keyword>
<keyword id="KW-0460">Magnesium</keyword>
<keyword id="KW-0479">Metal-binding</keyword>
<keyword id="KW-0547">Nucleotide-binding</keyword>
<gene>
    <name evidence="1" type="primary">obg</name>
    <name type="ordered locus">CTLon_0671</name>
</gene>